<keyword id="KW-0687">Ribonucleoprotein</keyword>
<keyword id="KW-0689">Ribosomal protein</keyword>
<keyword id="KW-0694">RNA-binding</keyword>
<keyword id="KW-0699">rRNA-binding</keyword>
<sequence>MALKNFNPITPSLRELVQVDKTSLWKGRPLKSLTKGISKTGGRNNQGRITSWHRGGGHKKLYRIIDFKRNKIDISAIVERIEYDPNRTAFIALIKYEDGEYSYILAPQKLSVGNRVISSQDADIKIGNCLPLKCIPIGTTLHNVEMQVGKGGQIARSAGTSVDLVGKDSGYAQIKLRSGEFRLVPLDCKATIGSISNPDQKNINLGKAGRNRWLGWRPHVRGVAMNPVDHPHGGGEGKTSGGRHPVTPWGFPTKGKKTRKNKRTSKFIVKKRK</sequence>
<name>RL2_RICM5</name>
<accession>A8F2E4</accession>
<organism>
    <name type="scientific">Rickettsia massiliae (strain Mtu5)</name>
    <dbReference type="NCBI Taxonomy" id="416276"/>
    <lineage>
        <taxon>Bacteria</taxon>
        <taxon>Pseudomonadati</taxon>
        <taxon>Pseudomonadota</taxon>
        <taxon>Alphaproteobacteria</taxon>
        <taxon>Rickettsiales</taxon>
        <taxon>Rickettsiaceae</taxon>
        <taxon>Rickettsieae</taxon>
        <taxon>Rickettsia</taxon>
        <taxon>spotted fever group</taxon>
    </lineage>
</organism>
<evidence type="ECO:0000255" key="1">
    <source>
        <dbReference type="HAMAP-Rule" id="MF_01320"/>
    </source>
</evidence>
<evidence type="ECO:0000256" key="2">
    <source>
        <dbReference type="SAM" id="MobiDB-lite"/>
    </source>
</evidence>
<evidence type="ECO:0000305" key="3"/>
<comment type="function">
    <text evidence="1">One of the primary rRNA binding proteins. Required for association of the 30S and 50S subunits to form the 70S ribosome, for tRNA binding and peptide bond formation. It has been suggested to have peptidyltransferase activity; this is somewhat controversial. Makes several contacts with the 16S rRNA in the 70S ribosome.</text>
</comment>
<comment type="subunit">
    <text evidence="1">Part of the 50S ribosomal subunit. Forms a bridge to the 30S subunit in the 70S ribosome.</text>
</comment>
<comment type="similarity">
    <text evidence="1">Belongs to the universal ribosomal protein uL2 family.</text>
</comment>
<gene>
    <name evidence="1" type="primary">rplB</name>
    <name type="ordered locus">RMA_1037</name>
</gene>
<proteinExistence type="inferred from homology"/>
<protein>
    <recommendedName>
        <fullName evidence="1">Large ribosomal subunit protein uL2</fullName>
    </recommendedName>
    <alternativeName>
        <fullName evidence="3">50S ribosomal protein L2</fullName>
    </alternativeName>
</protein>
<feature type="chain" id="PRO_1000067544" description="Large ribosomal subunit protein uL2">
    <location>
        <begin position="1"/>
        <end position="273"/>
    </location>
</feature>
<feature type="region of interest" description="Disordered" evidence="2">
    <location>
        <begin position="228"/>
        <end position="273"/>
    </location>
</feature>
<feature type="compositionally biased region" description="Basic residues" evidence="2">
    <location>
        <begin position="254"/>
        <end position="273"/>
    </location>
</feature>
<reference key="1">
    <citation type="journal article" date="2007" name="Genome Res.">
        <title>Lateral gene transfer between obligate intracellular bacteria: evidence from the Rickettsia massiliae genome.</title>
        <authorList>
            <person name="Blanc G."/>
            <person name="Ogata H."/>
            <person name="Robert C."/>
            <person name="Audic S."/>
            <person name="Claverie J.-M."/>
            <person name="Raoult D."/>
        </authorList>
    </citation>
    <scope>NUCLEOTIDE SEQUENCE [LARGE SCALE GENOMIC DNA]</scope>
    <source>
        <strain>Mtu5</strain>
    </source>
</reference>
<dbReference type="EMBL" id="CP000683">
    <property type="protein sequence ID" value="ABV85080.1"/>
    <property type="molecule type" value="Genomic_DNA"/>
</dbReference>
<dbReference type="RefSeq" id="WP_012153046.1">
    <property type="nucleotide sequence ID" value="NC_009900.1"/>
</dbReference>
<dbReference type="SMR" id="A8F2E4"/>
<dbReference type="KEGG" id="rms:RMA_1037"/>
<dbReference type="HOGENOM" id="CLU_036235_2_1_5"/>
<dbReference type="Proteomes" id="UP000001311">
    <property type="component" value="Chromosome"/>
</dbReference>
<dbReference type="GO" id="GO:0015934">
    <property type="term" value="C:large ribosomal subunit"/>
    <property type="evidence" value="ECO:0007669"/>
    <property type="project" value="InterPro"/>
</dbReference>
<dbReference type="GO" id="GO:0019843">
    <property type="term" value="F:rRNA binding"/>
    <property type="evidence" value="ECO:0007669"/>
    <property type="project" value="UniProtKB-UniRule"/>
</dbReference>
<dbReference type="GO" id="GO:0003735">
    <property type="term" value="F:structural constituent of ribosome"/>
    <property type="evidence" value="ECO:0007669"/>
    <property type="project" value="InterPro"/>
</dbReference>
<dbReference type="GO" id="GO:0016740">
    <property type="term" value="F:transferase activity"/>
    <property type="evidence" value="ECO:0007669"/>
    <property type="project" value="InterPro"/>
</dbReference>
<dbReference type="GO" id="GO:0006412">
    <property type="term" value="P:translation"/>
    <property type="evidence" value="ECO:0007669"/>
    <property type="project" value="UniProtKB-UniRule"/>
</dbReference>
<dbReference type="FunFam" id="2.30.30.30:FF:000001">
    <property type="entry name" value="50S ribosomal protein L2"/>
    <property type="match status" value="1"/>
</dbReference>
<dbReference type="FunFam" id="2.40.50.140:FF:000003">
    <property type="entry name" value="50S ribosomal protein L2"/>
    <property type="match status" value="1"/>
</dbReference>
<dbReference type="FunFam" id="4.10.950.10:FF:000001">
    <property type="entry name" value="50S ribosomal protein L2"/>
    <property type="match status" value="1"/>
</dbReference>
<dbReference type="Gene3D" id="2.30.30.30">
    <property type="match status" value="1"/>
</dbReference>
<dbReference type="Gene3D" id="2.40.50.140">
    <property type="entry name" value="Nucleic acid-binding proteins"/>
    <property type="match status" value="1"/>
</dbReference>
<dbReference type="Gene3D" id="4.10.950.10">
    <property type="entry name" value="Ribosomal protein L2, domain 3"/>
    <property type="match status" value="1"/>
</dbReference>
<dbReference type="HAMAP" id="MF_01320_B">
    <property type="entry name" value="Ribosomal_uL2_B"/>
    <property type="match status" value="1"/>
</dbReference>
<dbReference type="InterPro" id="IPR012340">
    <property type="entry name" value="NA-bd_OB-fold"/>
</dbReference>
<dbReference type="InterPro" id="IPR014722">
    <property type="entry name" value="Rib_uL2_dom2"/>
</dbReference>
<dbReference type="InterPro" id="IPR002171">
    <property type="entry name" value="Ribosomal_uL2"/>
</dbReference>
<dbReference type="InterPro" id="IPR005880">
    <property type="entry name" value="Ribosomal_uL2_bac/org-type"/>
</dbReference>
<dbReference type="InterPro" id="IPR022669">
    <property type="entry name" value="Ribosomal_uL2_C"/>
</dbReference>
<dbReference type="InterPro" id="IPR022671">
    <property type="entry name" value="Ribosomal_uL2_CS"/>
</dbReference>
<dbReference type="InterPro" id="IPR014726">
    <property type="entry name" value="Ribosomal_uL2_dom3"/>
</dbReference>
<dbReference type="InterPro" id="IPR022666">
    <property type="entry name" value="Ribosomal_uL2_RNA-bd_dom"/>
</dbReference>
<dbReference type="InterPro" id="IPR008991">
    <property type="entry name" value="Translation_prot_SH3-like_sf"/>
</dbReference>
<dbReference type="NCBIfam" id="TIGR01171">
    <property type="entry name" value="rplB_bact"/>
    <property type="match status" value="1"/>
</dbReference>
<dbReference type="PANTHER" id="PTHR13691:SF5">
    <property type="entry name" value="LARGE RIBOSOMAL SUBUNIT PROTEIN UL2M"/>
    <property type="match status" value="1"/>
</dbReference>
<dbReference type="PANTHER" id="PTHR13691">
    <property type="entry name" value="RIBOSOMAL PROTEIN L2"/>
    <property type="match status" value="1"/>
</dbReference>
<dbReference type="Pfam" id="PF00181">
    <property type="entry name" value="Ribosomal_L2"/>
    <property type="match status" value="1"/>
</dbReference>
<dbReference type="Pfam" id="PF03947">
    <property type="entry name" value="Ribosomal_L2_C"/>
    <property type="match status" value="1"/>
</dbReference>
<dbReference type="PIRSF" id="PIRSF002158">
    <property type="entry name" value="Ribosomal_L2"/>
    <property type="match status" value="1"/>
</dbReference>
<dbReference type="SMART" id="SM01383">
    <property type="entry name" value="Ribosomal_L2"/>
    <property type="match status" value="1"/>
</dbReference>
<dbReference type="SMART" id="SM01382">
    <property type="entry name" value="Ribosomal_L2_C"/>
    <property type="match status" value="1"/>
</dbReference>
<dbReference type="SUPFAM" id="SSF50249">
    <property type="entry name" value="Nucleic acid-binding proteins"/>
    <property type="match status" value="1"/>
</dbReference>
<dbReference type="SUPFAM" id="SSF50104">
    <property type="entry name" value="Translation proteins SH3-like domain"/>
    <property type="match status" value="1"/>
</dbReference>
<dbReference type="PROSITE" id="PS00467">
    <property type="entry name" value="RIBOSOMAL_L2"/>
    <property type="match status" value="1"/>
</dbReference>